<reference key="1">
    <citation type="journal article" date="2000" name="Mol. Microbiol.">
        <title>An Agrobacterium catalase is a virulence factor involved in tumorigenesis.</title>
        <authorList>
            <person name="Xu X.Q."/>
            <person name="Pan S.Q."/>
        </authorList>
    </citation>
    <scope>NUCLEOTIDE SEQUENCE [GENOMIC DNA]</scope>
    <scope>FUNCTION</scope>
    <source>
        <strain>A348</strain>
    </source>
</reference>
<name>KATG_RHIRD</name>
<proteinExistence type="inferred from homology"/>
<evidence type="ECO:0000255" key="1">
    <source>
        <dbReference type="HAMAP-Rule" id="MF_01961"/>
    </source>
</evidence>
<evidence type="ECO:0000269" key="2">
    <source>
    </source>
</evidence>
<keyword id="KW-0349">Heme</keyword>
<keyword id="KW-0376">Hydrogen peroxide</keyword>
<keyword id="KW-0408">Iron</keyword>
<keyword id="KW-0479">Metal-binding</keyword>
<keyword id="KW-0560">Oxidoreductase</keyword>
<keyword id="KW-0575">Peroxidase</keyword>
<dbReference type="EC" id="1.11.1.21" evidence="1"/>
<dbReference type="EMBL" id="AB033631">
    <property type="protein sequence ID" value="BAA89349.1"/>
    <property type="molecule type" value="Genomic_DNA"/>
</dbReference>
<dbReference type="SMR" id="Q9R708"/>
<dbReference type="PeroxiBase" id="2692">
    <property type="entry name" value="AtuCP01_C58"/>
</dbReference>
<dbReference type="eggNOG" id="COG0376">
    <property type="taxonomic scope" value="Bacteria"/>
</dbReference>
<dbReference type="GO" id="GO:0005829">
    <property type="term" value="C:cytosol"/>
    <property type="evidence" value="ECO:0007669"/>
    <property type="project" value="TreeGrafter"/>
</dbReference>
<dbReference type="GO" id="GO:0004096">
    <property type="term" value="F:catalase activity"/>
    <property type="evidence" value="ECO:0007669"/>
    <property type="project" value="UniProtKB-UniRule"/>
</dbReference>
<dbReference type="GO" id="GO:0020037">
    <property type="term" value="F:heme binding"/>
    <property type="evidence" value="ECO:0007669"/>
    <property type="project" value="InterPro"/>
</dbReference>
<dbReference type="GO" id="GO:0046872">
    <property type="term" value="F:metal ion binding"/>
    <property type="evidence" value="ECO:0007669"/>
    <property type="project" value="UniProtKB-KW"/>
</dbReference>
<dbReference type="GO" id="GO:0070301">
    <property type="term" value="P:cellular response to hydrogen peroxide"/>
    <property type="evidence" value="ECO:0007669"/>
    <property type="project" value="TreeGrafter"/>
</dbReference>
<dbReference type="GO" id="GO:0042744">
    <property type="term" value="P:hydrogen peroxide catabolic process"/>
    <property type="evidence" value="ECO:0007669"/>
    <property type="project" value="UniProtKB-KW"/>
</dbReference>
<dbReference type="FunFam" id="1.10.420.10:FF:000004">
    <property type="entry name" value="Catalase-peroxidase"/>
    <property type="match status" value="1"/>
</dbReference>
<dbReference type="FunFam" id="1.10.520.10:FF:000002">
    <property type="entry name" value="Catalase-peroxidase"/>
    <property type="match status" value="1"/>
</dbReference>
<dbReference type="Gene3D" id="1.10.520.10">
    <property type="match status" value="2"/>
</dbReference>
<dbReference type="Gene3D" id="1.10.420.10">
    <property type="entry name" value="Peroxidase, domain 2"/>
    <property type="match status" value="2"/>
</dbReference>
<dbReference type="HAMAP" id="MF_01961">
    <property type="entry name" value="Catal_peroxid"/>
    <property type="match status" value="1"/>
</dbReference>
<dbReference type="InterPro" id="IPR000763">
    <property type="entry name" value="Catalase_peroxidase"/>
</dbReference>
<dbReference type="InterPro" id="IPR002016">
    <property type="entry name" value="Haem_peroxidase"/>
</dbReference>
<dbReference type="InterPro" id="IPR010255">
    <property type="entry name" value="Haem_peroxidase_sf"/>
</dbReference>
<dbReference type="InterPro" id="IPR019794">
    <property type="entry name" value="Peroxidases_AS"/>
</dbReference>
<dbReference type="NCBIfam" id="TIGR00198">
    <property type="entry name" value="cat_per_HPI"/>
    <property type="match status" value="1"/>
</dbReference>
<dbReference type="NCBIfam" id="NF011635">
    <property type="entry name" value="PRK15061.1"/>
    <property type="match status" value="1"/>
</dbReference>
<dbReference type="PANTHER" id="PTHR30555:SF6">
    <property type="entry name" value="CATALASE-PEROXIDASE"/>
    <property type="match status" value="1"/>
</dbReference>
<dbReference type="PANTHER" id="PTHR30555">
    <property type="entry name" value="HYDROPEROXIDASE I, BIFUNCTIONAL CATALASE-PEROXIDASE"/>
    <property type="match status" value="1"/>
</dbReference>
<dbReference type="Pfam" id="PF00141">
    <property type="entry name" value="peroxidase"/>
    <property type="match status" value="2"/>
</dbReference>
<dbReference type="PRINTS" id="PR00460">
    <property type="entry name" value="BPEROXIDASE"/>
</dbReference>
<dbReference type="PRINTS" id="PR00458">
    <property type="entry name" value="PEROXIDASE"/>
</dbReference>
<dbReference type="SUPFAM" id="SSF48113">
    <property type="entry name" value="Heme-dependent peroxidases"/>
    <property type="match status" value="2"/>
</dbReference>
<dbReference type="PROSITE" id="PS00436">
    <property type="entry name" value="PEROXIDASE_2"/>
    <property type="match status" value="1"/>
</dbReference>
<dbReference type="PROSITE" id="PS50873">
    <property type="entry name" value="PEROXIDASE_4"/>
    <property type="match status" value="1"/>
</dbReference>
<protein>
    <recommendedName>
        <fullName evidence="1">Catalase-peroxidase</fullName>
        <shortName evidence="1">CP</shortName>
        <ecNumber evidence="1">1.11.1.21</ecNumber>
    </recommendedName>
    <alternativeName>
        <fullName evidence="1">Peroxidase/catalase</fullName>
    </alternativeName>
</protein>
<comment type="function">
    <text evidence="1 2">Bifunctional enzyme with both catalase and broad-spectrum peroxidase activity (By similarity). Involved in tumorigenesis.</text>
</comment>
<comment type="catalytic activity">
    <reaction evidence="1">
        <text>H2O2 + AH2 = A + 2 H2O</text>
        <dbReference type="Rhea" id="RHEA:30275"/>
        <dbReference type="ChEBI" id="CHEBI:13193"/>
        <dbReference type="ChEBI" id="CHEBI:15377"/>
        <dbReference type="ChEBI" id="CHEBI:16240"/>
        <dbReference type="ChEBI" id="CHEBI:17499"/>
        <dbReference type="EC" id="1.11.1.21"/>
    </reaction>
</comment>
<comment type="catalytic activity">
    <reaction evidence="1">
        <text>2 H2O2 = O2 + 2 H2O</text>
        <dbReference type="Rhea" id="RHEA:20309"/>
        <dbReference type="ChEBI" id="CHEBI:15377"/>
        <dbReference type="ChEBI" id="CHEBI:15379"/>
        <dbReference type="ChEBI" id="CHEBI:16240"/>
        <dbReference type="EC" id="1.11.1.21"/>
    </reaction>
</comment>
<comment type="cofactor">
    <cofactor evidence="1">
        <name>heme b</name>
        <dbReference type="ChEBI" id="CHEBI:60344"/>
    </cofactor>
    <text evidence="1">Binds 1 heme b (iron(II)-protoporphyrin IX) group per dimer.</text>
</comment>
<comment type="subunit">
    <text evidence="1">Homodimer or homotetramer.</text>
</comment>
<comment type="PTM">
    <text evidence="1">Formation of the three residue Trp-Tyr-Met cross-link is important for the catalase, but not the peroxidase activity of the enzyme.</text>
</comment>
<comment type="similarity">
    <text evidence="1">Belongs to the peroxidase family. Peroxidase/catalase subfamily.</text>
</comment>
<organism>
    <name type="scientific">Rhizobium radiobacter</name>
    <name type="common">Agrobacterium tumefaciens</name>
    <name type="synonym">Agrobacterium radiobacter</name>
    <dbReference type="NCBI Taxonomy" id="358"/>
    <lineage>
        <taxon>Bacteria</taxon>
        <taxon>Pseudomonadati</taxon>
        <taxon>Pseudomonadota</taxon>
        <taxon>Alphaproteobacteria</taxon>
        <taxon>Hyphomicrobiales</taxon>
        <taxon>Rhizobiaceae</taxon>
        <taxon>Rhizobium/Agrobacterium group</taxon>
        <taxon>Agrobacterium</taxon>
        <taxon>Agrobacterium tumefaciens complex</taxon>
    </lineage>
</organism>
<sequence>MDATSKPAGKCPVMHGGNTVSGKSVTEWWPNALNLDILHQHDTKTNPLGTSFNYREALKTLDVEALKADLRALMTDSQEWWPADWGSYVGMMARVTWHAAGSYRVTDGRGGANTGNQRFAPLNSWPDNVNTDKGRRLLWPIKKKYGNKISWADLIALAGTIAYDVAGLKTFGFAFGREDIWAPEKDTYWGDEKEWLAPSDGRYGDVSKPETLENPLAAVQMGLIYVNPEGVNGKSDPLATAAQMRETFARMGMDDEETVALTAGGHTIGKSHGNGSAANLSPDPEAAGPEYQGLGWINTKGRGIGRDTVVSGIEGAWTSEPTKWDNGFFDMLFKHEWTLTHSPAGASQWAPITIAEEDKPVDVEDASIRTIPMMTDADMALKVDPIYREISLKFKDDQDHFSDVFARAWFKLTHRDMGPKSRYVGPDVPAEDLIWQDPIPAGSTSYDVAAVKAKIAASGLSVADLVSTAWDSARTFRGSDKRGGANGARIRLAPQKDWEGNEPARLSRVLSVLEPIARETGASIADVIVLAGNYGVEQAAKAAGFDIAVPFAAGRGDASAEQTDADSFAPLEPLADGFRNWVKKDYVVSPEELLLDRAQLLGLTAPELTVLIGGLRVIGANYGGAAHGVFTDKPGALTTDFFTTLTDMAYSWVPTGNNLYEIRDRKTGAARYSATRVDLVIGSNSILRAYAEVYAQDDNREKFARDFIAAWTKVMNADRFDLI</sequence>
<feature type="chain" id="PRO_0000354715" description="Catalase-peroxidase">
    <location>
        <begin position="1"/>
        <end position="723"/>
    </location>
</feature>
<feature type="active site" description="Proton acceptor" evidence="1">
    <location>
        <position position="98"/>
    </location>
</feature>
<feature type="binding site" description="axial binding residue" evidence="1">
    <location>
        <position position="266"/>
    </location>
    <ligand>
        <name>heme b</name>
        <dbReference type="ChEBI" id="CHEBI:60344"/>
    </ligand>
    <ligandPart>
        <name>Fe</name>
        <dbReference type="ChEBI" id="CHEBI:18248"/>
    </ligandPart>
</feature>
<feature type="site" description="Transition state stabilizer" evidence="1">
    <location>
        <position position="94"/>
    </location>
</feature>
<feature type="cross-link" description="Tryptophyl-tyrosyl-methioninium (Trp-Tyr) (with M-251)" evidence="1">
    <location>
        <begin position="97"/>
        <end position="225"/>
    </location>
</feature>
<feature type="cross-link" description="Tryptophyl-tyrosyl-methioninium (Tyr-Met) (with W-97)" evidence="1">
    <location>
        <begin position="225"/>
        <end position="251"/>
    </location>
</feature>
<accession>Q9R708</accession>
<gene>
    <name evidence="1" type="primary">katG</name>
    <name type="synonym">katA</name>
</gene>